<organism>
    <name type="scientific">Buchnera aphidicola subsp. Acyrthosiphon pisum (strain 5A)</name>
    <dbReference type="NCBI Taxonomy" id="563178"/>
    <lineage>
        <taxon>Bacteria</taxon>
        <taxon>Pseudomonadati</taxon>
        <taxon>Pseudomonadota</taxon>
        <taxon>Gammaproteobacteria</taxon>
        <taxon>Enterobacterales</taxon>
        <taxon>Erwiniaceae</taxon>
        <taxon>Buchnera</taxon>
    </lineage>
</organism>
<comment type="function">
    <text evidence="1">Hydrolyzes diadenosine 5',5'''-P1,P4-tetraphosphate to yield ADP.</text>
</comment>
<comment type="catalytic activity">
    <reaction evidence="1">
        <text>P(1),P(4)-bis(5'-adenosyl) tetraphosphate + H2O = 2 ADP + 2 H(+)</text>
        <dbReference type="Rhea" id="RHEA:24252"/>
        <dbReference type="ChEBI" id="CHEBI:15377"/>
        <dbReference type="ChEBI" id="CHEBI:15378"/>
        <dbReference type="ChEBI" id="CHEBI:58141"/>
        <dbReference type="ChEBI" id="CHEBI:456216"/>
        <dbReference type="EC" id="3.6.1.41"/>
    </reaction>
</comment>
<comment type="similarity">
    <text evidence="1">Belongs to the Ap4A hydrolase family.</text>
</comment>
<dbReference type="EC" id="3.6.1.41" evidence="1"/>
<dbReference type="EMBL" id="CP001161">
    <property type="protein sequence ID" value="ACL30515.1"/>
    <property type="molecule type" value="Genomic_DNA"/>
</dbReference>
<dbReference type="RefSeq" id="WP_009874098.1">
    <property type="nucleotide sequence ID" value="NC_011833.1"/>
</dbReference>
<dbReference type="SMR" id="B8D8U3"/>
<dbReference type="KEGG" id="bap:BUAP5A_140"/>
<dbReference type="HOGENOM" id="CLU_056184_2_0_6"/>
<dbReference type="OrthoDB" id="9807890at2"/>
<dbReference type="Proteomes" id="UP000006904">
    <property type="component" value="Chromosome"/>
</dbReference>
<dbReference type="GO" id="GO:0008803">
    <property type="term" value="F:bis(5'-nucleosyl)-tetraphosphatase (symmetrical) activity"/>
    <property type="evidence" value="ECO:0007669"/>
    <property type="project" value="UniProtKB-UniRule"/>
</dbReference>
<dbReference type="CDD" id="cd07422">
    <property type="entry name" value="MPP_ApaH"/>
    <property type="match status" value="1"/>
</dbReference>
<dbReference type="Gene3D" id="3.60.21.10">
    <property type="match status" value="1"/>
</dbReference>
<dbReference type="HAMAP" id="MF_00199">
    <property type="entry name" value="ApaH"/>
    <property type="match status" value="1"/>
</dbReference>
<dbReference type="InterPro" id="IPR004617">
    <property type="entry name" value="ApaH"/>
</dbReference>
<dbReference type="InterPro" id="IPR004843">
    <property type="entry name" value="Calcineurin-like_PHP_ApaH"/>
</dbReference>
<dbReference type="InterPro" id="IPR029052">
    <property type="entry name" value="Metallo-depent_PP-like"/>
</dbReference>
<dbReference type="NCBIfam" id="TIGR00668">
    <property type="entry name" value="apaH"/>
    <property type="match status" value="1"/>
</dbReference>
<dbReference type="NCBIfam" id="NF001204">
    <property type="entry name" value="PRK00166.1"/>
    <property type="match status" value="1"/>
</dbReference>
<dbReference type="PANTHER" id="PTHR40942">
    <property type="match status" value="1"/>
</dbReference>
<dbReference type="PANTHER" id="PTHR40942:SF2">
    <property type="entry name" value="CYTOCHROME-RELATED"/>
    <property type="match status" value="1"/>
</dbReference>
<dbReference type="Pfam" id="PF00149">
    <property type="entry name" value="Metallophos"/>
    <property type="match status" value="1"/>
</dbReference>
<dbReference type="PIRSF" id="PIRSF000903">
    <property type="entry name" value="B5n-ttraPtase_sm"/>
    <property type="match status" value="1"/>
</dbReference>
<dbReference type="SUPFAM" id="SSF56300">
    <property type="entry name" value="Metallo-dependent phosphatases"/>
    <property type="match status" value="1"/>
</dbReference>
<gene>
    <name evidence="1" type="primary">apaH</name>
    <name type="ordered locus">BUAP5A_140</name>
</gene>
<feature type="chain" id="PRO_1000124447" description="Bis(5'-nucleosyl)-tetraphosphatase, symmetrical">
    <location>
        <begin position="1"/>
        <end position="274"/>
    </location>
</feature>
<keyword id="KW-0378">Hydrolase</keyword>
<accession>B8D8U3</accession>
<name>APAH_BUCA5</name>
<evidence type="ECO:0000255" key="1">
    <source>
        <dbReference type="HAMAP-Rule" id="MF_00199"/>
    </source>
</evidence>
<protein>
    <recommendedName>
        <fullName evidence="1">Bis(5'-nucleosyl)-tetraphosphatase, symmetrical</fullName>
        <ecNumber evidence="1">3.6.1.41</ecNumber>
    </recommendedName>
    <alternativeName>
        <fullName evidence="1">Ap4A hydrolase</fullName>
    </alternativeName>
    <alternativeName>
        <fullName evidence="1">Diadenosine 5',5'''-P1,P4-tetraphosphate pyrophosphohydrolase</fullName>
    </alternativeName>
    <alternativeName>
        <fullName evidence="1">Diadenosine tetraphosphatase</fullName>
    </alternativeName>
</protein>
<proteinExistence type="inferred from homology"/>
<reference key="1">
    <citation type="journal article" date="2009" name="Science">
        <title>The dynamics and time scale of ongoing genomic erosion in symbiotic bacteria.</title>
        <authorList>
            <person name="Moran N.A."/>
            <person name="McLaughlin H.J."/>
            <person name="Sorek R."/>
        </authorList>
    </citation>
    <scope>NUCLEOTIDE SEQUENCE [LARGE SCALE GENOMIC DNA]</scope>
    <source>
        <strain>5A</strain>
    </source>
</reference>
<sequence>MSTYFISDIHGCYEEFRILLEKSSFNDKKDYLWIAGDLVSRGPDSLKVVKYLYSLKDRVQIVLGNHDINLIAVHAGIKDNKKENYFDEFLSSPDSVELINWLRCQSFLKVDEKRKIIMSHAGISPQWDINIAKVCALEIEDRLSHKNYALFLKEIYHNNIDFWRLDLNQLDRLRYSMNSFTRMRYCYPDGRLNMFCKKSPDFVKYPLRPWFLMPSSISKVYSIFFGHWSSLKGTHVPKPFFPLDAGCCWGEELVMLRWEDGKWFSQAYLSKKCI</sequence>